<dbReference type="EC" id="3.6.4.-" evidence="1"/>
<dbReference type="EMBL" id="CP000053">
    <property type="protein sequence ID" value="AAY61457.1"/>
    <property type="molecule type" value="Genomic_DNA"/>
</dbReference>
<dbReference type="SMR" id="Q4ULW6"/>
<dbReference type="STRING" id="315456.RF_0606"/>
<dbReference type="KEGG" id="rfe:RF_0606"/>
<dbReference type="eggNOG" id="COG2255">
    <property type="taxonomic scope" value="Bacteria"/>
</dbReference>
<dbReference type="HOGENOM" id="CLU_055599_1_0_5"/>
<dbReference type="OrthoDB" id="9804478at2"/>
<dbReference type="Proteomes" id="UP000008548">
    <property type="component" value="Chromosome"/>
</dbReference>
<dbReference type="GO" id="GO:0005737">
    <property type="term" value="C:cytoplasm"/>
    <property type="evidence" value="ECO:0007669"/>
    <property type="project" value="UniProtKB-SubCell"/>
</dbReference>
<dbReference type="GO" id="GO:0048476">
    <property type="term" value="C:Holliday junction resolvase complex"/>
    <property type="evidence" value="ECO:0007669"/>
    <property type="project" value="UniProtKB-UniRule"/>
</dbReference>
<dbReference type="GO" id="GO:0005524">
    <property type="term" value="F:ATP binding"/>
    <property type="evidence" value="ECO:0007669"/>
    <property type="project" value="UniProtKB-UniRule"/>
</dbReference>
<dbReference type="GO" id="GO:0016887">
    <property type="term" value="F:ATP hydrolysis activity"/>
    <property type="evidence" value="ECO:0007669"/>
    <property type="project" value="InterPro"/>
</dbReference>
<dbReference type="GO" id="GO:0000400">
    <property type="term" value="F:four-way junction DNA binding"/>
    <property type="evidence" value="ECO:0007669"/>
    <property type="project" value="UniProtKB-UniRule"/>
</dbReference>
<dbReference type="GO" id="GO:0009378">
    <property type="term" value="F:four-way junction helicase activity"/>
    <property type="evidence" value="ECO:0007669"/>
    <property type="project" value="InterPro"/>
</dbReference>
<dbReference type="GO" id="GO:0006310">
    <property type="term" value="P:DNA recombination"/>
    <property type="evidence" value="ECO:0007669"/>
    <property type="project" value="UniProtKB-UniRule"/>
</dbReference>
<dbReference type="GO" id="GO:0006281">
    <property type="term" value="P:DNA repair"/>
    <property type="evidence" value="ECO:0007669"/>
    <property type="project" value="UniProtKB-UniRule"/>
</dbReference>
<dbReference type="CDD" id="cd00009">
    <property type="entry name" value="AAA"/>
    <property type="match status" value="1"/>
</dbReference>
<dbReference type="Gene3D" id="1.10.8.60">
    <property type="match status" value="1"/>
</dbReference>
<dbReference type="Gene3D" id="3.40.50.300">
    <property type="entry name" value="P-loop containing nucleotide triphosphate hydrolases"/>
    <property type="match status" value="1"/>
</dbReference>
<dbReference type="Gene3D" id="1.10.10.10">
    <property type="entry name" value="Winged helix-like DNA-binding domain superfamily/Winged helix DNA-binding domain"/>
    <property type="match status" value="1"/>
</dbReference>
<dbReference type="HAMAP" id="MF_00016">
    <property type="entry name" value="DNA_HJ_migration_RuvB"/>
    <property type="match status" value="1"/>
</dbReference>
<dbReference type="InterPro" id="IPR003593">
    <property type="entry name" value="AAA+_ATPase"/>
</dbReference>
<dbReference type="InterPro" id="IPR041445">
    <property type="entry name" value="AAA_lid_4"/>
</dbReference>
<dbReference type="InterPro" id="IPR004605">
    <property type="entry name" value="DNA_helicase_Holl-junc_RuvB"/>
</dbReference>
<dbReference type="InterPro" id="IPR027417">
    <property type="entry name" value="P-loop_NTPase"/>
</dbReference>
<dbReference type="InterPro" id="IPR008824">
    <property type="entry name" value="RuvB-like_N"/>
</dbReference>
<dbReference type="InterPro" id="IPR008823">
    <property type="entry name" value="RuvB_C"/>
</dbReference>
<dbReference type="InterPro" id="IPR036388">
    <property type="entry name" value="WH-like_DNA-bd_sf"/>
</dbReference>
<dbReference type="InterPro" id="IPR036390">
    <property type="entry name" value="WH_DNA-bd_sf"/>
</dbReference>
<dbReference type="NCBIfam" id="NF000868">
    <property type="entry name" value="PRK00080.1"/>
    <property type="match status" value="1"/>
</dbReference>
<dbReference type="NCBIfam" id="TIGR00635">
    <property type="entry name" value="ruvB"/>
    <property type="match status" value="1"/>
</dbReference>
<dbReference type="PANTHER" id="PTHR42848">
    <property type="match status" value="1"/>
</dbReference>
<dbReference type="PANTHER" id="PTHR42848:SF1">
    <property type="entry name" value="HOLLIDAY JUNCTION BRANCH MIGRATION COMPLEX SUBUNIT RUVB"/>
    <property type="match status" value="1"/>
</dbReference>
<dbReference type="Pfam" id="PF17864">
    <property type="entry name" value="AAA_lid_4"/>
    <property type="match status" value="1"/>
</dbReference>
<dbReference type="Pfam" id="PF05491">
    <property type="entry name" value="RuvB_C"/>
    <property type="match status" value="1"/>
</dbReference>
<dbReference type="Pfam" id="PF05496">
    <property type="entry name" value="RuvB_N"/>
    <property type="match status" value="1"/>
</dbReference>
<dbReference type="SMART" id="SM00382">
    <property type="entry name" value="AAA"/>
    <property type="match status" value="1"/>
</dbReference>
<dbReference type="SUPFAM" id="SSF52540">
    <property type="entry name" value="P-loop containing nucleoside triphosphate hydrolases"/>
    <property type="match status" value="1"/>
</dbReference>
<dbReference type="SUPFAM" id="SSF46785">
    <property type="entry name" value="Winged helix' DNA-binding domain"/>
    <property type="match status" value="1"/>
</dbReference>
<feature type="chain" id="PRO_0000235399" description="Holliday junction branch migration complex subunit RuvB">
    <location>
        <begin position="1"/>
        <end position="342"/>
    </location>
</feature>
<feature type="region of interest" description="Large ATPase domain (RuvB-L)" evidence="1">
    <location>
        <begin position="1"/>
        <end position="179"/>
    </location>
</feature>
<feature type="region of interest" description="Small ATPAse domain (RuvB-S)" evidence="1">
    <location>
        <begin position="180"/>
        <end position="250"/>
    </location>
</feature>
<feature type="region of interest" description="Head domain (RuvB-H)" evidence="1">
    <location>
        <begin position="253"/>
        <end position="342"/>
    </location>
</feature>
<feature type="binding site" evidence="1">
    <location>
        <position position="18"/>
    </location>
    <ligand>
        <name>ATP</name>
        <dbReference type="ChEBI" id="CHEBI:30616"/>
    </ligand>
</feature>
<feature type="binding site" evidence="1">
    <location>
        <position position="19"/>
    </location>
    <ligand>
        <name>ATP</name>
        <dbReference type="ChEBI" id="CHEBI:30616"/>
    </ligand>
</feature>
<feature type="binding site" evidence="1">
    <location>
        <position position="60"/>
    </location>
    <ligand>
        <name>ATP</name>
        <dbReference type="ChEBI" id="CHEBI:30616"/>
    </ligand>
</feature>
<feature type="binding site" evidence="1">
    <location>
        <position position="63"/>
    </location>
    <ligand>
        <name>ATP</name>
        <dbReference type="ChEBI" id="CHEBI:30616"/>
    </ligand>
</feature>
<feature type="binding site" evidence="1">
    <location>
        <position position="64"/>
    </location>
    <ligand>
        <name>ATP</name>
        <dbReference type="ChEBI" id="CHEBI:30616"/>
    </ligand>
</feature>
<feature type="binding site" evidence="1">
    <location>
        <position position="64"/>
    </location>
    <ligand>
        <name>Mg(2+)</name>
        <dbReference type="ChEBI" id="CHEBI:18420"/>
    </ligand>
</feature>
<feature type="binding site" evidence="1">
    <location>
        <position position="65"/>
    </location>
    <ligand>
        <name>ATP</name>
        <dbReference type="ChEBI" id="CHEBI:30616"/>
    </ligand>
</feature>
<feature type="binding site" evidence="1">
    <location>
        <begin position="126"/>
        <end position="128"/>
    </location>
    <ligand>
        <name>ATP</name>
        <dbReference type="ChEBI" id="CHEBI:30616"/>
    </ligand>
</feature>
<feature type="binding site" evidence="1">
    <location>
        <position position="169"/>
    </location>
    <ligand>
        <name>ATP</name>
        <dbReference type="ChEBI" id="CHEBI:30616"/>
    </ligand>
</feature>
<feature type="binding site" evidence="1">
    <location>
        <position position="179"/>
    </location>
    <ligand>
        <name>ATP</name>
        <dbReference type="ChEBI" id="CHEBI:30616"/>
    </ligand>
</feature>
<feature type="binding site" evidence="1">
    <location>
        <position position="216"/>
    </location>
    <ligand>
        <name>ATP</name>
        <dbReference type="ChEBI" id="CHEBI:30616"/>
    </ligand>
</feature>
<feature type="binding site" evidence="1">
    <location>
        <position position="289"/>
    </location>
    <ligand>
        <name>DNA</name>
        <dbReference type="ChEBI" id="CHEBI:16991"/>
    </ligand>
</feature>
<feature type="binding site" evidence="1">
    <location>
        <position position="308"/>
    </location>
    <ligand>
        <name>DNA</name>
        <dbReference type="ChEBI" id="CHEBI:16991"/>
    </ligand>
</feature>
<feature type="binding site" evidence="1">
    <location>
        <position position="313"/>
    </location>
    <ligand>
        <name>DNA</name>
        <dbReference type="ChEBI" id="CHEBI:16991"/>
    </ligand>
</feature>
<name>RUVB_RICFE</name>
<comment type="function">
    <text evidence="1">The RuvA-RuvB-RuvC complex processes Holliday junction (HJ) DNA during genetic recombination and DNA repair, while the RuvA-RuvB complex plays an important role in the rescue of blocked DNA replication forks via replication fork reversal (RFR). RuvA specifically binds to HJ cruciform DNA, conferring on it an open structure. The RuvB hexamer acts as an ATP-dependent pump, pulling dsDNA into and through the RuvAB complex. RuvB forms 2 homohexamers on either side of HJ DNA bound by 1 or 2 RuvA tetramers; 4 subunits per hexamer contact DNA at a time. Coordinated motions by a converter formed by DNA-disengaged RuvB subunits stimulates ATP hydrolysis and nucleotide exchange. Immobilization of the converter enables RuvB to convert the ATP-contained energy into a lever motion, pulling 2 nucleotides of DNA out of the RuvA tetramer per ATP hydrolyzed, thus driving DNA branch migration. The RuvB motors rotate together with the DNA substrate, which together with the progressing nucleotide cycle form the mechanistic basis for DNA recombination by continuous HJ branch migration. Branch migration allows RuvC to scan DNA until it finds its consensus sequence, where it cleaves and resolves cruciform DNA.</text>
</comment>
<comment type="catalytic activity">
    <reaction evidence="1">
        <text>ATP + H2O = ADP + phosphate + H(+)</text>
        <dbReference type="Rhea" id="RHEA:13065"/>
        <dbReference type="ChEBI" id="CHEBI:15377"/>
        <dbReference type="ChEBI" id="CHEBI:15378"/>
        <dbReference type="ChEBI" id="CHEBI:30616"/>
        <dbReference type="ChEBI" id="CHEBI:43474"/>
        <dbReference type="ChEBI" id="CHEBI:456216"/>
    </reaction>
</comment>
<comment type="subunit">
    <text evidence="1">Homohexamer. Forms an RuvA(8)-RuvB(12)-Holliday junction (HJ) complex. HJ DNA is sandwiched between 2 RuvA tetramers; dsDNA enters through RuvA and exits via RuvB. An RuvB hexamer assembles on each DNA strand where it exits the tetramer. Each RuvB hexamer is contacted by two RuvA subunits (via domain III) on 2 adjacent RuvB subunits; this complex drives branch migration. In the full resolvosome a probable DNA-RuvA(4)-RuvB(12)-RuvC(2) complex forms which resolves the HJ.</text>
</comment>
<comment type="subcellular location">
    <subcellularLocation>
        <location evidence="1">Cytoplasm</location>
    </subcellularLocation>
</comment>
<comment type="domain">
    <text evidence="1">Has 3 domains, the large (RuvB-L) and small ATPase (RuvB-S) domains and the C-terminal head (RuvB-H) domain. The head domain binds DNA, while the ATPase domains jointly bind ATP, ADP or are empty depending on the state of the subunit in the translocation cycle. During a single DNA translocation step the structure of each domain remains the same, but their relative positions change.</text>
</comment>
<comment type="similarity">
    <text evidence="1">Belongs to the RuvB family.</text>
</comment>
<keyword id="KW-0067">ATP-binding</keyword>
<keyword id="KW-0963">Cytoplasm</keyword>
<keyword id="KW-0227">DNA damage</keyword>
<keyword id="KW-0233">DNA recombination</keyword>
<keyword id="KW-0234">DNA repair</keyword>
<keyword id="KW-0238">DNA-binding</keyword>
<keyword id="KW-0378">Hydrolase</keyword>
<keyword id="KW-0547">Nucleotide-binding</keyword>
<sequence length="342" mass="38419">MTNILSPEKIENDQELPIRPSYLQEFVGQQQIKENLSVFIKAAKSRNEHLDHTLFYGPPGLGKTTLAKIISNEIGGNFKSTSGPAILKAADLAAILTNLEKNDVLFIDEIHRLNTAVEEVLYPAMEDFELDIIIGEGPAARSVKITLPKFTLIGATTRLGLLSNPLRDRFGIPMRLNFYNTEELKKVLNRASKLFDIDLTDSGSEEIAKRSRGTPRIALRLLRRIRDFAAVDGKSRVDKEISDFGLNRLEVDHIGLDSNDYRYLKFIADNYNGGPVGIETIAAALSEQRDALEETIEPYLIQIGLLQRTPRGRVITIAAFEHLKMPIPNQSHHQFNIFNENE</sequence>
<organism>
    <name type="scientific">Rickettsia felis (strain ATCC VR-1525 / URRWXCal2)</name>
    <name type="common">Rickettsia azadi</name>
    <dbReference type="NCBI Taxonomy" id="315456"/>
    <lineage>
        <taxon>Bacteria</taxon>
        <taxon>Pseudomonadati</taxon>
        <taxon>Pseudomonadota</taxon>
        <taxon>Alphaproteobacteria</taxon>
        <taxon>Rickettsiales</taxon>
        <taxon>Rickettsiaceae</taxon>
        <taxon>Rickettsieae</taxon>
        <taxon>Rickettsia</taxon>
        <taxon>spotted fever group</taxon>
    </lineage>
</organism>
<reference key="1">
    <citation type="journal article" date="2005" name="PLoS Biol.">
        <title>The genome sequence of Rickettsia felis identifies the first putative conjugative plasmid in an obligate intracellular parasite.</title>
        <authorList>
            <person name="Ogata H."/>
            <person name="Renesto P."/>
            <person name="Audic S."/>
            <person name="Robert C."/>
            <person name="Blanc G."/>
            <person name="Fournier P.-E."/>
            <person name="Parinello H."/>
            <person name="Claverie J.-M."/>
            <person name="Raoult D."/>
        </authorList>
    </citation>
    <scope>NUCLEOTIDE SEQUENCE [LARGE SCALE GENOMIC DNA]</scope>
    <source>
        <strain>ATCC VR-1525 / URRWXCal2</strain>
    </source>
</reference>
<proteinExistence type="inferred from homology"/>
<gene>
    <name evidence="1" type="primary">ruvB</name>
    <name type="ordered locus">RF_0606</name>
</gene>
<protein>
    <recommendedName>
        <fullName evidence="1">Holliday junction branch migration complex subunit RuvB</fullName>
        <ecNumber evidence="1">3.6.4.-</ecNumber>
    </recommendedName>
</protein>
<evidence type="ECO:0000255" key="1">
    <source>
        <dbReference type="HAMAP-Rule" id="MF_00016"/>
    </source>
</evidence>
<accession>Q4ULW6</accession>